<sequence length="179" mass="19485">MSSRVLTPDVVGIDALVHDHQTVLAKAEGGVVAVFANNAPAFYAVTPARLAELLALEEKLARPGSDVALDDQLYQEPQAAPVAVPMGKFAMYPDWQPDADFIRLAALWGVALREPVTTEELTSFIAYWQAEGKVFHHVQWQQKLARSLQIGRASNGGLPKRDVNTVSEPDSQIPPGFRG</sequence>
<protein>
    <recommendedName>
        <fullName evidence="1">Replication restart protein DnaT</fullName>
    </recommendedName>
</protein>
<dbReference type="EMBL" id="CP000802">
    <property type="protein sequence ID" value="ABV08745.1"/>
    <property type="molecule type" value="Genomic_DNA"/>
</dbReference>
<dbReference type="RefSeq" id="WP_000098819.1">
    <property type="nucleotide sequence ID" value="NC_009800.1"/>
</dbReference>
<dbReference type="BMRB" id="A8A891"/>
<dbReference type="SMR" id="A8A891"/>
<dbReference type="KEGG" id="ecx:EcHS_A4594"/>
<dbReference type="HOGENOM" id="CLU_1501592_0_0_6"/>
<dbReference type="GO" id="GO:1990077">
    <property type="term" value="C:primosome complex"/>
    <property type="evidence" value="ECO:0007669"/>
    <property type="project" value="UniProtKB-KW"/>
</dbReference>
<dbReference type="GO" id="GO:0006269">
    <property type="term" value="P:DNA replication, synthesis of primer"/>
    <property type="evidence" value="ECO:0007669"/>
    <property type="project" value="UniProtKB-UniRule"/>
</dbReference>
<dbReference type="Gene3D" id="1.10.8.1180">
    <property type="match status" value="1"/>
</dbReference>
<dbReference type="HAMAP" id="MF_01061">
    <property type="entry name" value="DnaT"/>
    <property type="match status" value="1"/>
</dbReference>
<dbReference type="InterPro" id="IPR020917">
    <property type="entry name" value="DnaT"/>
</dbReference>
<dbReference type="InterPro" id="IPR040480">
    <property type="entry name" value="DnaT_DNA_bind"/>
</dbReference>
<dbReference type="NCBIfam" id="NF002770">
    <property type="entry name" value="PRK02854.1"/>
    <property type="match status" value="1"/>
</dbReference>
<dbReference type="Pfam" id="PF17948">
    <property type="entry name" value="DnaT"/>
    <property type="match status" value="1"/>
</dbReference>
<evidence type="ECO:0000255" key="1">
    <source>
        <dbReference type="HAMAP-Rule" id="MF_01061"/>
    </source>
</evidence>
<evidence type="ECO:0000256" key="2">
    <source>
        <dbReference type="SAM" id="MobiDB-lite"/>
    </source>
</evidence>
<feature type="chain" id="PRO_1000064462" description="Replication restart protein DnaT">
    <location>
        <begin position="1"/>
        <end position="179"/>
    </location>
</feature>
<feature type="region of interest" description="Disordered" evidence="2">
    <location>
        <begin position="155"/>
        <end position="179"/>
    </location>
</feature>
<comment type="function">
    <text evidence="1">Involved in the restart of stalled replication forks, which reloads the replicative helicase on sites other than the origin of replication. Can function in multiple replication restart pathways. Displaces ssDNA from a PriB-ssDNA complex. Probably forms a spiral filament on ssDNA.</text>
</comment>
<comment type="subunit">
    <text evidence="1">Homooligomerizes. Interacts with PriB. Component of the replication restart primosome. Primosome assembly occurs via a 'hand-off' mechanism. PriA binds to replication forks, subsequently PriB then DnaT bind; DnaT then displaces ssDNA to generate the helicase loading substrate.</text>
</comment>
<comment type="similarity">
    <text evidence="1">Belongs to the DnaT family.</text>
</comment>
<name>DNAT_ECOHS</name>
<reference key="1">
    <citation type="journal article" date="2008" name="J. Bacteriol.">
        <title>The pangenome structure of Escherichia coli: comparative genomic analysis of E. coli commensal and pathogenic isolates.</title>
        <authorList>
            <person name="Rasko D.A."/>
            <person name="Rosovitz M.J."/>
            <person name="Myers G.S.A."/>
            <person name="Mongodin E.F."/>
            <person name="Fricke W.F."/>
            <person name="Gajer P."/>
            <person name="Crabtree J."/>
            <person name="Sebaihia M."/>
            <person name="Thomson N.R."/>
            <person name="Chaudhuri R."/>
            <person name="Henderson I.R."/>
            <person name="Sperandio V."/>
            <person name="Ravel J."/>
        </authorList>
    </citation>
    <scope>NUCLEOTIDE SEQUENCE [LARGE SCALE GENOMIC DNA]</scope>
    <source>
        <strain>HS</strain>
    </source>
</reference>
<proteinExistence type="inferred from homology"/>
<accession>A8A891</accession>
<keyword id="KW-0235">DNA replication</keyword>
<keyword id="KW-0238">DNA-binding</keyword>
<keyword id="KW-0639">Primosome</keyword>
<organism>
    <name type="scientific">Escherichia coli O9:H4 (strain HS)</name>
    <dbReference type="NCBI Taxonomy" id="331112"/>
    <lineage>
        <taxon>Bacteria</taxon>
        <taxon>Pseudomonadati</taxon>
        <taxon>Pseudomonadota</taxon>
        <taxon>Gammaproteobacteria</taxon>
        <taxon>Enterobacterales</taxon>
        <taxon>Enterobacteriaceae</taxon>
        <taxon>Escherichia</taxon>
    </lineage>
</organism>
<gene>
    <name evidence="1" type="primary">dnaT</name>
    <name type="ordered locus">EcHS_A4594</name>
</gene>